<sequence length="206" mass="22797">MRYTVALTGGIGSGKSTVADAFADLGITVIDADIIARQMVEPGQPALNAIAEHFGSELIAADGTLRRRALRERIFSHPEEKAWLNALLHPLIQQETQQQFQQATSPYVLWVVPLLVENRLYQKANRVLVVDVMPETQLIRTMQRDDVTREHVEHILAAQATREARLAVADDVIDNNGAPDAIASDVARLHASYLKLASQFVSQEKP</sequence>
<reference key="1">
    <citation type="journal article" date="2004" name="Nat. Genet.">
        <title>Comparison of genome degradation in Paratyphi A and Typhi, human-restricted serovars of Salmonella enterica that cause typhoid.</title>
        <authorList>
            <person name="McClelland M."/>
            <person name="Sanderson K.E."/>
            <person name="Clifton S.W."/>
            <person name="Latreille P."/>
            <person name="Porwollik S."/>
            <person name="Sabo A."/>
            <person name="Meyer R."/>
            <person name="Bieri T."/>
            <person name="Ozersky P."/>
            <person name="McLellan M."/>
            <person name="Harkins C.R."/>
            <person name="Wang C."/>
            <person name="Nguyen C."/>
            <person name="Berghoff A."/>
            <person name="Elliott G."/>
            <person name="Kohlberg S."/>
            <person name="Strong C."/>
            <person name="Du F."/>
            <person name="Carter J."/>
            <person name="Kremizki C."/>
            <person name="Layman D."/>
            <person name="Leonard S."/>
            <person name="Sun H."/>
            <person name="Fulton L."/>
            <person name="Nash W."/>
            <person name="Miner T."/>
            <person name="Minx P."/>
            <person name="Delehaunty K."/>
            <person name="Fronick C."/>
            <person name="Magrini V."/>
            <person name="Nhan M."/>
            <person name="Warren W."/>
            <person name="Florea L."/>
            <person name="Spieth J."/>
            <person name="Wilson R.K."/>
        </authorList>
    </citation>
    <scope>NUCLEOTIDE SEQUENCE [LARGE SCALE GENOMIC DNA]</scope>
    <source>
        <strain>ATCC 9150 / SARB42</strain>
    </source>
</reference>
<comment type="function">
    <text evidence="1">Catalyzes the phosphorylation of the 3'-hydroxyl group of dephosphocoenzyme A to form coenzyme A.</text>
</comment>
<comment type="catalytic activity">
    <reaction evidence="1">
        <text>3'-dephospho-CoA + ATP = ADP + CoA + H(+)</text>
        <dbReference type="Rhea" id="RHEA:18245"/>
        <dbReference type="ChEBI" id="CHEBI:15378"/>
        <dbReference type="ChEBI" id="CHEBI:30616"/>
        <dbReference type="ChEBI" id="CHEBI:57287"/>
        <dbReference type="ChEBI" id="CHEBI:57328"/>
        <dbReference type="ChEBI" id="CHEBI:456216"/>
        <dbReference type="EC" id="2.7.1.24"/>
    </reaction>
</comment>
<comment type="pathway">
    <text evidence="1">Cofactor biosynthesis; coenzyme A biosynthesis; CoA from (R)-pantothenate: step 5/5.</text>
</comment>
<comment type="subcellular location">
    <subcellularLocation>
        <location evidence="1">Cytoplasm</location>
    </subcellularLocation>
</comment>
<comment type="similarity">
    <text evidence="1">Belongs to the CoaE family.</text>
</comment>
<keyword id="KW-0067">ATP-binding</keyword>
<keyword id="KW-0173">Coenzyme A biosynthesis</keyword>
<keyword id="KW-0963">Cytoplasm</keyword>
<keyword id="KW-0418">Kinase</keyword>
<keyword id="KW-0547">Nucleotide-binding</keyword>
<keyword id="KW-0808">Transferase</keyword>
<proteinExistence type="inferred from homology"/>
<evidence type="ECO:0000255" key="1">
    <source>
        <dbReference type="HAMAP-Rule" id="MF_00376"/>
    </source>
</evidence>
<feature type="chain" id="PRO_0000243338" description="Dephospho-CoA kinase">
    <location>
        <begin position="1"/>
        <end position="206"/>
    </location>
</feature>
<feature type="domain" description="DPCK" evidence="1">
    <location>
        <begin position="4"/>
        <end position="200"/>
    </location>
</feature>
<feature type="binding site" evidence="1">
    <location>
        <begin position="12"/>
        <end position="17"/>
    </location>
    <ligand>
        <name>ATP</name>
        <dbReference type="ChEBI" id="CHEBI:30616"/>
    </ligand>
</feature>
<accession>Q5PDH9</accession>
<protein>
    <recommendedName>
        <fullName evidence="1">Dephospho-CoA kinase</fullName>
        <ecNumber evidence="1">2.7.1.24</ecNumber>
    </recommendedName>
    <alternativeName>
        <fullName evidence="1">Dephosphocoenzyme A kinase</fullName>
    </alternativeName>
</protein>
<organism>
    <name type="scientific">Salmonella paratyphi A (strain ATCC 9150 / SARB42)</name>
    <dbReference type="NCBI Taxonomy" id="295319"/>
    <lineage>
        <taxon>Bacteria</taxon>
        <taxon>Pseudomonadati</taxon>
        <taxon>Pseudomonadota</taxon>
        <taxon>Gammaproteobacteria</taxon>
        <taxon>Enterobacterales</taxon>
        <taxon>Enterobacteriaceae</taxon>
        <taxon>Salmonella</taxon>
    </lineage>
</organism>
<name>COAE_SALPA</name>
<gene>
    <name evidence="1" type="primary">coaE</name>
    <name type="ordered locus">SPA0144</name>
</gene>
<dbReference type="EC" id="2.7.1.24" evidence="1"/>
<dbReference type="EMBL" id="CP000026">
    <property type="protein sequence ID" value="AAV76177.1"/>
    <property type="molecule type" value="Genomic_DNA"/>
</dbReference>
<dbReference type="RefSeq" id="WP_001270909.1">
    <property type="nucleotide sequence ID" value="NC_006511.1"/>
</dbReference>
<dbReference type="SMR" id="Q5PDH9"/>
<dbReference type="KEGG" id="spt:SPA0144"/>
<dbReference type="HOGENOM" id="CLU_057180_1_2_6"/>
<dbReference type="UniPathway" id="UPA00241">
    <property type="reaction ID" value="UER00356"/>
</dbReference>
<dbReference type="Proteomes" id="UP000008185">
    <property type="component" value="Chromosome"/>
</dbReference>
<dbReference type="GO" id="GO:0005737">
    <property type="term" value="C:cytoplasm"/>
    <property type="evidence" value="ECO:0007669"/>
    <property type="project" value="UniProtKB-SubCell"/>
</dbReference>
<dbReference type="GO" id="GO:0005524">
    <property type="term" value="F:ATP binding"/>
    <property type="evidence" value="ECO:0007669"/>
    <property type="project" value="UniProtKB-UniRule"/>
</dbReference>
<dbReference type="GO" id="GO:0004140">
    <property type="term" value="F:dephospho-CoA kinase activity"/>
    <property type="evidence" value="ECO:0007669"/>
    <property type="project" value="UniProtKB-UniRule"/>
</dbReference>
<dbReference type="GO" id="GO:0015937">
    <property type="term" value="P:coenzyme A biosynthetic process"/>
    <property type="evidence" value="ECO:0007669"/>
    <property type="project" value="UniProtKB-UniRule"/>
</dbReference>
<dbReference type="CDD" id="cd02022">
    <property type="entry name" value="DPCK"/>
    <property type="match status" value="1"/>
</dbReference>
<dbReference type="FunFam" id="3.40.50.300:FF:000518">
    <property type="entry name" value="Dephospho-CoA kinase"/>
    <property type="match status" value="1"/>
</dbReference>
<dbReference type="Gene3D" id="3.40.50.300">
    <property type="entry name" value="P-loop containing nucleotide triphosphate hydrolases"/>
    <property type="match status" value="1"/>
</dbReference>
<dbReference type="HAMAP" id="MF_00376">
    <property type="entry name" value="Dephospho_CoA_kinase"/>
    <property type="match status" value="1"/>
</dbReference>
<dbReference type="InterPro" id="IPR001977">
    <property type="entry name" value="Depp_CoAkinase"/>
</dbReference>
<dbReference type="InterPro" id="IPR027417">
    <property type="entry name" value="P-loop_NTPase"/>
</dbReference>
<dbReference type="NCBIfam" id="TIGR00152">
    <property type="entry name" value="dephospho-CoA kinase"/>
    <property type="match status" value="1"/>
</dbReference>
<dbReference type="PANTHER" id="PTHR10695:SF46">
    <property type="entry name" value="BIFUNCTIONAL COENZYME A SYNTHASE-RELATED"/>
    <property type="match status" value="1"/>
</dbReference>
<dbReference type="PANTHER" id="PTHR10695">
    <property type="entry name" value="DEPHOSPHO-COA KINASE-RELATED"/>
    <property type="match status" value="1"/>
</dbReference>
<dbReference type="Pfam" id="PF01121">
    <property type="entry name" value="CoaE"/>
    <property type="match status" value="1"/>
</dbReference>
<dbReference type="SUPFAM" id="SSF52540">
    <property type="entry name" value="P-loop containing nucleoside triphosphate hydrolases"/>
    <property type="match status" value="1"/>
</dbReference>
<dbReference type="PROSITE" id="PS51219">
    <property type="entry name" value="DPCK"/>
    <property type="match status" value="1"/>
</dbReference>